<gene>
    <name type="primary">PPH3</name>
    <name type="ordered locus">CAGL0K10208g</name>
</gene>
<keyword id="KW-0963">Cytoplasm</keyword>
<keyword id="KW-0378">Hydrolase</keyword>
<keyword id="KW-0464">Manganese</keyword>
<keyword id="KW-0479">Metal-binding</keyword>
<keyword id="KW-0488">Methylation</keyword>
<keyword id="KW-0539">Nucleus</keyword>
<keyword id="KW-0904">Protein phosphatase</keyword>
<keyword id="KW-1185">Reference proteome</keyword>
<name>PP4C_CANGA</name>
<protein>
    <recommendedName>
        <fullName>Serine/threonine-protein phosphatase 4 catalytic subunit</fullName>
        <shortName>PP4C</shortName>
        <ecNumber>3.1.3.16</ecNumber>
    </recommendedName>
</protein>
<feature type="chain" id="PRO_0000223650" description="Serine/threonine-protein phosphatase 4 catalytic subunit">
    <location>
        <begin position="1"/>
        <end position="309"/>
    </location>
</feature>
<feature type="active site" description="Proton donor" evidence="1">
    <location>
        <position position="113"/>
    </location>
</feature>
<feature type="binding site" evidence="1">
    <location>
        <position position="52"/>
    </location>
    <ligand>
        <name>Mn(2+)</name>
        <dbReference type="ChEBI" id="CHEBI:29035"/>
        <label>1</label>
    </ligand>
</feature>
<feature type="binding site" evidence="1">
    <location>
        <position position="54"/>
    </location>
    <ligand>
        <name>Mn(2+)</name>
        <dbReference type="ChEBI" id="CHEBI:29035"/>
        <label>1</label>
    </ligand>
</feature>
<feature type="binding site" evidence="1">
    <location>
        <position position="80"/>
    </location>
    <ligand>
        <name>Mn(2+)</name>
        <dbReference type="ChEBI" id="CHEBI:29035"/>
        <label>1</label>
    </ligand>
</feature>
<feature type="binding site" evidence="1">
    <location>
        <position position="80"/>
    </location>
    <ligand>
        <name>Mn(2+)</name>
        <dbReference type="ChEBI" id="CHEBI:29035"/>
        <label>2</label>
    </ligand>
</feature>
<feature type="binding site" evidence="1">
    <location>
        <position position="112"/>
    </location>
    <ligand>
        <name>Mn(2+)</name>
        <dbReference type="ChEBI" id="CHEBI:29035"/>
        <label>2</label>
    </ligand>
</feature>
<feature type="binding site" evidence="1">
    <location>
        <position position="162"/>
    </location>
    <ligand>
        <name>Mn(2+)</name>
        <dbReference type="ChEBI" id="CHEBI:29035"/>
        <label>2</label>
    </ligand>
</feature>
<feature type="binding site" evidence="1">
    <location>
        <position position="236"/>
    </location>
    <ligand>
        <name>Mn(2+)</name>
        <dbReference type="ChEBI" id="CHEBI:29035"/>
        <label>2</label>
    </ligand>
</feature>
<feature type="modified residue" description="Leucine methyl ester" evidence="1">
    <location>
        <position position="309"/>
    </location>
</feature>
<accession>Q6FM81</accession>
<reference key="1">
    <citation type="journal article" date="2004" name="Nature">
        <title>Genome evolution in yeasts.</title>
        <authorList>
            <person name="Dujon B."/>
            <person name="Sherman D."/>
            <person name="Fischer G."/>
            <person name="Durrens P."/>
            <person name="Casaregola S."/>
            <person name="Lafontaine I."/>
            <person name="de Montigny J."/>
            <person name="Marck C."/>
            <person name="Neuveglise C."/>
            <person name="Talla E."/>
            <person name="Goffard N."/>
            <person name="Frangeul L."/>
            <person name="Aigle M."/>
            <person name="Anthouard V."/>
            <person name="Babour A."/>
            <person name="Barbe V."/>
            <person name="Barnay S."/>
            <person name="Blanchin S."/>
            <person name="Beckerich J.-M."/>
            <person name="Beyne E."/>
            <person name="Bleykasten C."/>
            <person name="Boisrame A."/>
            <person name="Boyer J."/>
            <person name="Cattolico L."/>
            <person name="Confanioleri F."/>
            <person name="de Daruvar A."/>
            <person name="Despons L."/>
            <person name="Fabre E."/>
            <person name="Fairhead C."/>
            <person name="Ferry-Dumazet H."/>
            <person name="Groppi A."/>
            <person name="Hantraye F."/>
            <person name="Hennequin C."/>
            <person name="Jauniaux N."/>
            <person name="Joyet P."/>
            <person name="Kachouri R."/>
            <person name="Kerrest A."/>
            <person name="Koszul R."/>
            <person name="Lemaire M."/>
            <person name="Lesur I."/>
            <person name="Ma L."/>
            <person name="Muller H."/>
            <person name="Nicaud J.-M."/>
            <person name="Nikolski M."/>
            <person name="Oztas S."/>
            <person name="Ozier-Kalogeropoulos O."/>
            <person name="Pellenz S."/>
            <person name="Potier S."/>
            <person name="Richard G.-F."/>
            <person name="Straub M.-L."/>
            <person name="Suleau A."/>
            <person name="Swennen D."/>
            <person name="Tekaia F."/>
            <person name="Wesolowski-Louvel M."/>
            <person name="Westhof E."/>
            <person name="Wirth B."/>
            <person name="Zeniou-Meyer M."/>
            <person name="Zivanovic Y."/>
            <person name="Bolotin-Fukuhara M."/>
            <person name="Thierry A."/>
            <person name="Bouchier C."/>
            <person name="Caudron B."/>
            <person name="Scarpelli C."/>
            <person name="Gaillardin C."/>
            <person name="Weissenbach J."/>
            <person name="Wincker P."/>
            <person name="Souciet J.-L."/>
        </authorList>
    </citation>
    <scope>NUCLEOTIDE SEQUENCE [LARGE SCALE GENOMIC DNA]</scope>
    <source>
        <strain>ATCC 2001 / BCRC 20586 / JCM 3761 / NBRC 0622 / NRRL Y-65 / CBS 138</strain>
    </source>
</reference>
<dbReference type="EC" id="3.1.3.16"/>
<dbReference type="EMBL" id="CR380957">
    <property type="protein sequence ID" value="CAG61626.1"/>
    <property type="molecule type" value="Genomic_DNA"/>
</dbReference>
<dbReference type="RefSeq" id="XP_448663.1">
    <property type="nucleotide sequence ID" value="XM_448663.1"/>
</dbReference>
<dbReference type="SMR" id="Q6FM81"/>
<dbReference type="FunCoup" id="Q6FM81">
    <property type="interactions" value="118"/>
</dbReference>
<dbReference type="STRING" id="284593.Q6FM81"/>
<dbReference type="EnsemblFungi" id="CAGL0K10208g-T">
    <property type="protein sequence ID" value="CAGL0K10208g-T-p1"/>
    <property type="gene ID" value="CAGL0K10208g"/>
</dbReference>
<dbReference type="KEGG" id="cgr:2890113"/>
<dbReference type="CGD" id="CAL0134435">
    <property type="gene designation" value="CAGL0K10208g"/>
</dbReference>
<dbReference type="VEuPathDB" id="FungiDB:B1J91_K10208g"/>
<dbReference type="VEuPathDB" id="FungiDB:CAGL0K10208g"/>
<dbReference type="eggNOG" id="KOG0372">
    <property type="taxonomic scope" value="Eukaryota"/>
</dbReference>
<dbReference type="HOGENOM" id="CLU_004962_8_1_1"/>
<dbReference type="InParanoid" id="Q6FM81"/>
<dbReference type="OMA" id="LCEIICD"/>
<dbReference type="Proteomes" id="UP000002428">
    <property type="component" value="Chromosome K"/>
</dbReference>
<dbReference type="GO" id="GO:0005737">
    <property type="term" value="C:cytoplasm"/>
    <property type="evidence" value="ECO:0007669"/>
    <property type="project" value="UniProtKB-SubCell"/>
</dbReference>
<dbReference type="GO" id="GO:0034399">
    <property type="term" value="C:nuclear periphery"/>
    <property type="evidence" value="ECO:0007669"/>
    <property type="project" value="EnsemblFungi"/>
</dbReference>
<dbReference type="GO" id="GO:0030289">
    <property type="term" value="C:protein phosphatase 4 complex"/>
    <property type="evidence" value="ECO:0007669"/>
    <property type="project" value="EnsemblFungi"/>
</dbReference>
<dbReference type="GO" id="GO:0046872">
    <property type="term" value="F:metal ion binding"/>
    <property type="evidence" value="ECO:0007669"/>
    <property type="project" value="UniProtKB-KW"/>
</dbReference>
<dbReference type="GO" id="GO:0004722">
    <property type="term" value="F:protein serine/threonine phosphatase activity"/>
    <property type="evidence" value="ECO:0007669"/>
    <property type="project" value="UniProtKB-EC"/>
</dbReference>
<dbReference type="GO" id="GO:0000724">
    <property type="term" value="P:double-strand break repair via homologous recombination"/>
    <property type="evidence" value="ECO:0007669"/>
    <property type="project" value="EnsemblFungi"/>
</dbReference>
<dbReference type="GO" id="GO:0051598">
    <property type="term" value="P:meiotic recombination checkpoint signaling"/>
    <property type="evidence" value="ECO:0007669"/>
    <property type="project" value="EnsemblFungi"/>
</dbReference>
<dbReference type="GO" id="GO:2000002">
    <property type="term" value="P:negative regulation of DNA damage checkpoint"/>
    <property type="evidence" value="ECO:0007669"/>
    <property type="project" value="EnsemblFungi"/>
</dbReference>
<dbReference type="GO" id="GO:1902660">
    <property type="term" value="P:negative regulation of glucose mediated signaling pathway"/>
    <property type="evidence" value="ECO:0007669"/>
    <property type="project" value="EnsemblFungi"/>
</dbReference>
<dbReference type="GO" id="GO:2001034">
    <property type="term" value="P:positive regulation of double-strand break repair via nonhomologous end joining"/>
    <property type="evidence" value="ECO:0007669"/>
    <property type="project" value="EnsemblFungi"/>
</dbReference>
<dbReference type="GO" id="GO:1903432">
    <property type="term" value="P:regulation of TORC1 signaling"/>
    <property type="evidence" value="ECO:0007669"/>
    <property type="project" value="EnsemblFungi"/>
</dbReference>
<dbReference type="CDD" id="cd07415">
    <property type="entry name" value="MPP_PP2A_PP4_PP6"/>
    <property type="match status" value="1"/>
</dbReference>
<dbReference type="FunFam" id="3.60.21.10:FF:000005">
    <property type="entry name" value="Serine/threonine-protein phosphatase"/>
    <property type="match status" value="1"/>
</dbReference>
<dbReference type="Gene3D" id="3.60.21.10">
    <property type="match status" value="1"/>
</dbReference>
<dbReference type="InterPro" id="IPR004843">
    <property type="entry name" value="Calcineurin-like_PHP_ApaH"/>
</dbReference>
<dbReference type="InterPro" id="IPR029052">
    <property type="entry name" value="Metallo-depent_PP-like"/>
</dbReference>
<dbReference type="InterPro" id="IPR047129">
    <property type="entry name" value="PPA2-like"/>
</dbReference>
<dbReference type="InterPro" id="IPR006186">
    <property type="entry name" value="Ser/Thr-sp_prot-phosphatase"/>
</dbReference>
<dbReference type="PANTHER" id="PTHR45619">
    <property type="entry name" value="SERINE/THREONINE-PROTEIN PHOSPHATASE PP2A-RELATED"/>
    <property type="match status" value="1"/>
</dbReference>
<dbReference type="Pfam" id="PF00149">
    <property type="entry name" value="Metallophos"/>
    <property type="match status" value="1"/>
</dbReference>
<dbReference type="PRINTS" id="PR00114">
    <property type="entry name" value="STPHPHTASE"/>
</dbReference>
<dbReference type="SMART" id="SM00156">
    <property type="entry name" value="PP2Ac"/>
    <property type="match status" value="1"/>
</dbReference>
<dbReference type="SUPFAM" id="SSF56300">
    <property type="entry name" value="Metallo-dependent phosphatases"/>
    <property type="match status" value="1"/>
</dbReference>
<dbReference type="PROSITE" id="PS00125">
    <property type="entry name" value="SER_THR_PHOSPHATASE"/>
    <property type="match status" value="1"/>
</dbReference>
<evidence type="ECO:0000250" key="1"/>
<evidence type="ECO:0000305" key="2"/>
<comment type="function">
    <text evidence="1">Forms the histone H2A phosphatase complex in association with the regulatory subunits PSY2 and PSY4, which dephosphorylates H2AS128ph (gamma-H2A) that has been displaced from sites of DNA lesions in the double-stranded DNA break repair process. Dephosphorylation is necessary for efficient recovery from the DNA damage checkpoint (By similarity).</text>
</comment>
<comment type="catalytic activity">
    <reaction>
        <text>O-phospho-L-seryl-[protein] + H2O = L-seryl-[protein] + phosphate</text>
        <dbReference type="Rhea" id="RHEA:20629"/>
        <dbReference type="Rhea" id="RHEA-COMP:9863"/>
        <dbReference type="Rhea" id="RHEA-COMP:11604"/>
        <dbReference type="ChEBI" id="CHEBI:15377"/>
        <dbReference type="ChEBI" id="CHEBI:29999"/>
        <dbReference type="ChEBI" id="CHEBI:43474"/>
        <dbReference type="ChEBI" id="CHEBI:83421"/>
        <dbReference type="EC" id="3.1.3.16"/>
    </reaction>
</comment>
<comment type="catalytic activity">
    <reaction>
        <text>O-phospho-L-threonyl-[protein] + H2O = L-threonyl-[protein] + phosphate</text>
        <dbReference type="Rhea" id="RHEA:47004"/>
        <dbReference type="Rhea" id="RHEA-COMP:11060"/>
        <dbReference type="Rhea" id="RHEA-COMP:11605"/>
        <dbReference type="ChEBI" id="CHEBI:15377"/>
        <dbReference type="ChEBI" id="CHEBI:30013"/>
        <dbReference type="ChEBI" id="CHEBI:43474"/>
        <dbReference type="ChEBI" id="CHEBI:61977"/>
        <dbReference type="EC" id="3.1.3.16"/>
    </reaction>
</comment>
<comment type="cofactor">
    <cofactor evidence="1">
        <name>Mn(2+)</name>
        <dbReference type="ChEBI" id="CHEBI:29035"/>
    </cofactor>
    <text evidence="1">Binds 2 manganese ions per subunit.</text>
</comment>
<comment type="subunit">
    <text evidence="1">Catalytic subunit of the histone H2A phosphatase complex (HTP-C) containing PPH3, PSY2 and PSY4.</text>
</comment>
<comment type="subcellular location">
    <subcellularLocation>
        <location evidence="1">Cytoplasm</location>
    </subcellularLocation>
    <subcellularLocation>
        <location evidence="1">Nucleus</location>
    </subcellularLocation>
</comment>
<comment type="similarity">
    <text evidence="2">Belongs to the PPP phosphatase family. PP-4 (PP-X) subfamily.</text>
</comment>
<proteinExistence type="inferred from homology"/>
<organism>
    <name type="scientific">Candida glabrata (strain ATCC 2001 / BCRC 20586 / JCM 3761 / NBRC 0622 / NRRL Y-65 / CBS 138)</name>
    <name type="common">Yeast</name>
    <name type="synonym">Nakaseomyces glabratus</name>
    <dbReference type="NCBI Taxonomy" id="284593"/>
    <lineage>
        <taxon>Eukaryota</taxon>
        <taxon>Fungi</taxon>
        <taxon>Dikarya</taxon>
        <taxon>Ascomycota</taxon>
        <taxon>Saccharomycotina</taxon>
        <taxon>Saccharomycetes</taxon>
        <taxon>Saccharomycetales</taxon>
        <taxon>Saccharomycetaceae</taxon>
        <taxon>Nakaseomyces</taxon>
    </lineage>
</organism>
<sequence>MLVDLDEILVSLKEGRHIPEETVYALCMDSQELLMNESNVARVDTPVTICGDIHGQLHDLLTLFEKSGGVEKTRYVFLGDFVDRGFYSLESFLLLLVYKLRYPDRITLIRGNHETRQITKVYGFYDEVMRKYGNSNVWRYCCEVFDYLSLGAIINDSIFCVHGGLSPDITTLNEIRAIDRKQEVPHEGGMCDLLWSDPDEVDTWSMSPRGAGFLFGKGEVDEFLHVNNVDLIARAHQLVMEGYKEMFDGGLVTVWSAPNYCYRCGNVAAVLKIEDNLERKYTIFEAVQAQNGVGNTIIPTKKAQMDYFL</sequence>